<evidence type="ECO:0000256" key="1">
    <source>
        <dbReference type="SAM" id="MobiDB-lite"/>
    </source>
</evidence>
<evidence type="ECO:0000305" key="2"/>
<keyword id="KW-1185">Reference proteome</keyword>
<dbReference type="EMBL" id="AE000516">
    <property type="protein sequence ID" value="AAK44578.1"/>
    <property type="status" value="ALT_INIT"/>
    <property type="molecule type" value="Genomic_DNA"/>
</dbReference>
<dbReference type="PIR" id="F70573">
    <property type="entry name" value="F70573"/>
</dbReference>
<dbReference type="KEGG" id="mtc:MT0356"/>
<dbReference type="HOGENOM" id="CLU_047818_0_0_11"/>
<dbReference type="Proteomes" id="UP000001020">
    <property type="component" value="Chromosome"/>
</dbReference>
<dbReference type="InterPro" id="IPR049709">
    <property type="entry name" value="IniB-like_N"/>
</dbReference>
<dbReference type="NCBIfam" id="NF038175">
    <property type="entry name" value="IniB_NTERM"/>
    <property type="match status" value="1"/>
</dbReference>
<protein>
    <recommendedName>
        <fullName>Isoniazid-induced protein IniB</fullName>
    </recommendedName>
</protein>
<reference key="1">
    <citation type="journal article" date="2002" name="J. Bacteriol.">
        <title>Whole-genome comparison of Mycobacterium tuberculosis clinical and laboratory strains.</title>
        <authorList>
            <person name="Fleischmann R.D."/>
            <person name="Alland D."/>
            <person name="Eisen J.A."/>
            <person name="Carpenter L."/>
            <person name="White O."/>
            <person name="Peterson J.D."/>
            <person name="DeBoy R.T."/>
            <person name="Dodson R.J."/>
            <person name="Gwinn M.L."/>
            <person name="Haft D.H."/>
            <person name="Hickey E.K."/>
            <person name="Kolonay J.F."/>
            <person name="Nelson W.C."/>
            <person name="Umayam L.A."/>
            <person name="Ermolaeva M.D."/>
            <person name="Salzberg S.L."/>
            <person name="Delcher A."/>
            <person name="Utterback T.R."/>
            <person name="Weidman J.F."/>
            <person name="Khouri H.M."/>
            <person name="Gill J."/>
            <person name="Mikula A."/>
            <person name="Bishai W."/>
            <person name="Jacobs W.R. Jr."/>
            <person name="Venter J.C."/>
            <person name="Fraser C.M."/>
        </authorList>
    </citation>
    <scope>NUCLEOTIDE SEQUENCE [LARGE SCALE GENOMIC DNA]</scope>
    <source>
        <strain>CDC 1551 / Oshkosh</strain>
    </source>
</reference>
<accession>P9WJ96</accession>
<accession>L0T3D4</accession>
<accession>O06292</accession>
<accession>Q8VKM5</accession>
<gene>
    <name type="primary">iniB</name>
    <name type="ordered locus">MT0356</name>
</gene>
<feature type="chain" id="PRO_0000427868" description="Isoniazid-induced protein IniB">
    <location>
        <begin position="1"/>
        <end position="479"/>
    </location>
</feature>
<feature type="region of interest" description="Disordered" evidence="1">
    <location>
        <begin position="417"/>
        <end position="464"/>
    </location>
</feature>
<proteinExistence type="predicted"/>
<organism>
    <name type="scientific">Mycobacterium tuberculosis (strain CDC 1551 / Oshkosh)</name>
    <dbReference type="NCBI Taxonomy" id="83331"/>
    <lineage>
        <taxon>Bacteria</taxon>
        <taxon>Bacillati</taxon>
        <taxon>Actinomycetota</taxon>
        <taxon>Actinomycetes</taxon>
        <taxon>Mycobacteriales</taxon>
        <taxon>Mycobacteriaceae</taxon>
        <taxon>Mycobacterium</taxon>
        <taxon>Mycobacterium tuberculosis complex</taxon>
    </lineage>
</organism>
<name>INIB_MYCTO</name>
<comment type="sequence caution" evidence="2">
    <conflict type="erroneous initiation">
        <sequence resource="EMBL-CDS" id="AAK44578"/>
    </conflict>
</comment>
<sequence length="479" mass="43911">MTSLIDYILSLFRSEDAARSFVAAPGRAMTSAGLIDIAPHQISSVAANVVPGLNLGAGDPMSGLRQAVAARHGFAQDVANVGFAGDAGAGVASVITTDVGAGLASGLGAGFLGQGGLALAASSGGFGGQVGLAAQVGLGFTAVIEAEVGAQVGAGLGIGTGLGAQAGMGFGGGVGLGLGGQAGGVIGGSAAGAIGAGVGGRVGGNGQIGVAGQGAVGAGVGAGVGGQAGIASQIGVSAGGGLGGVGNVSGLTGVSSNACLASNASGQAGLIASEGAALNGAAMPHLSGPLAGVGVGGQAGAAGGAGLGFGAVGHPTPQPAALGAAGVVAKTEAAAGVVGGVGGATAAGVGGAHGDILGHEGAALGSVDTVNAGVTPVEHGLVLPSGPLIHGGTGGYGGMNPPVTDAPAPQVPARAQPMTTAAEHTPAVTQPQHTPVEPPVHDKPPSHSVFDVGHEPPVTHTPPAPIELPSYGLFGLPGF</sequence>